<accession>Q66H91</accession>
<feature type="chain" id="PRO_0000452577" description="ARF GTPase-activating protein GIT2">
    <location>
        <begin position="1"/>
        <end position="759"/>
    </location>
</feature>
<feature type="domain" description="Arf-GAP" evidence="5">
    <location>
        <begin position="1"/>
        <end position="124"/>
    </location>
</feature>
<feature type="repeat" description="ANK 1" evidence="4">
    <location>
        <begin position="132"/>
        <end position="161"/>
    </location>
</feature>
<feature type="repeat" description="ANK 2" evidence="4">
    <location>
        <begin position="166"/>
        <end position="198"/>
    </location>
</feature>
<feature type="repeat" description="ANK 3" evidence="4">
    <location>
        <begin position="199"/>
        <end position="228"/>
    </location>
</feature>
<feature type="zinc finger region" description="C4-type" evidence="5">
    <location>
        <begin position="11"/>
        <end position="34"/>
    </location>
</feature>
<feature type="region of interest" description="Disordered" evidence="6">
    <location>
        <begin position="376"/>
        <end position="422"/>
    </location>
</feature>
<feature type="region of interest" description="Disordered" evidence="6">
    <location>
        <begin position="469"/>
        <end position="641"/>
    </location>
</feature>
<feature type="coiled-coil region" evidence="3">
    <location>
        <begin position="451"/>
        <end position="478"/>
    </location>
</feature>
<feature type="compositionally biased region" description="Acidic residues" evidence="6">
    <location>
        <begin position="385"/>
        <end position="402"/>
    </location>
</feature>
<feature type="compositionally biased region" description="Polar residues" evidence="6">
    <location>
        <begin position="469"/>
        <end position="489"/>
    </location>
</feature>
<feature type="compositionally biased region" description="Low complexity" evidence="6">
    <location>
        <begin position="555"/>
        <end position="569"/>
    </location>
</feature>
<feature type="compositionally biased region" description="Basic and acidic residues" evidence="6">
    <location>
        <begin position="570"/>
        <end position="583"/>
    </location>
</feature>
<evidence type="ECO:0000250" key="1">
    <source>
        <dbReference type="UniProtKB" id="Q14161"/>
    </source>
</evidence>
<evidence type="ECO:0000250" key="2">
    <source>
        <dbReference type="UniProtKB" id="Q9JLQ2"/>
    </source>
</evidence>
<evidence type="ECO:0000255" key="3"/>
<evidence type="ECO:0000255" key="4">
    <source>
        <dbReference type="PROSITE-ProRule" id="PRU00023"/>
    </source>
</evidence>
<evidence type="ECO:0000255" key="5">
    <source>
        <dbReference type="PROSITE-ProRule" id="PRU00288"/>
    </source>
</evidence>
<evidence type="ECO:0000256" key="6">
    <source>
        <dbReference type="SAM" id="MobiDB-lite"/>
    </source>
</evidence>
<evidence type="ECO:0000269" key="7">
    <source>
    </source>
</evidence>
<evidence type="ECO:0000269" key="8">
    <source>
    </source>
</evidence>
<evidence type="ECO:0000305" key="9">
    <source>
    </source>
</evidence>
<organism>
    <name type="scientific">Rattus norvegicus</name>
    <name type="common">Rat</name>
    <dbReference type="NCBI Taxonomy" id="10116"/>
    <lineage>
        <taxon>Eukaryota</taxon>
        <taxon>Metazoa</taxon>
        <taxon>Chordata</taxon>
        <taxon>Craniata</taxon>
        <taxon>Vertebrata</taxon>
        <taxon>Euteleostomi</taxon>
        <taxon>Mammalia</taxon>
        <taxon>Eutheria</taxon>
        <taxon>Euarchontoglires</taxon>
        <taxon>Glires</taxon>
        <taxon>Rodentia</taxon>
        <taxon>Myomorpha</taxon>
        <taxon>Muroidea</taxon>
        <taxon>Muridae</taxon>
        <taxon>Murinae</taxon>
        <taxon>Rattus</taxon>
    </lineage>
</organism>
<gene>
    <name type="primary">Git2</name>
</gene>
<dbReference type="EMBL" id="AC095845">
    <property type="status" value="NOT_ANNOTATED_CDS"/>
    <property type="molecule type" value="Genomic_DNA"/>
</dbReference>
<dbReference type="EMBL" id="BC081967">
    <property type="protein sequence ID" value="AAH81967.1"/>
    <property type="molecule type" value="mRNA"/>
</dbReference>
<dbReference type="RefSeq" id="NP_001005553.1">
    <property type="nucleotide sequence ID" value="NM_001005553.1"/>
</dbReference>
<dbReference type="SMR" id="Q66H91"/>
<dbReference type="FunCoup" id="Q66H91">
    <property type="interactions" value="3938"/>
</dbReference>
<dbReference type="STRING" id="10116.ENSRNOP00000048331"/>
<dbReference type="iPTMnet" id="Q66H91"/>
<dbReference type="PhosphoSitePlus" id="Q66H91"/>
<dbReference type="jPOST" id="Q66H91"/>
<dbReference type="PaxDb" id="10116-ENSRNOP00000048331"/>
<dbReference type="ABCD" id="Q66H91">
    <property type="antibodies" value="1 sequenced antibody"/>
</dbReference>
<dbReference type="GeneID" id="304546"/>
<dbReference type="KEGG" id="rno:304546"/>
<dbReference type="UCSC" id="RGD:1359708">
    <property type="organism name" value="rat"/>
</dbReference>
<dbReference type="AGR" id="RGD:1359708"/>
<dbReference type="CTD" id="9815"/>
<dbReference type="RGD" id="1359708">
    <property type="gene designation" value="Git2"/>
</dbReference>
<dbReference type="VEuPathDB" id="HostDB:ENSRNOG00000001190"/>
<dbReference type="eggNOG" id="KOG0818">
    <property type="taxonomic scope" value="Eukaryota"/>
</dbReference>
<dbReference type="HOGENOM" id="CLU_009739_0_0_1"/>
<dbReference type="InParanoid" id="Q66H91"/>
<dbReference type="PhylomeDB" id="Q66H91"/>
<dbReference type="TreeFam" id="TF317762"/>
<dbReference type="Reactome" id="R-RNO-9013149">
    <property type="pathway name" value="RAC1 GTPase cycle"/>
</dbReference>
<dbReference type="Reactome" id="R-RNO-9013404">
    <property type="pathway name" value="RAC2 GTPase cycle"/>
</dbReference>
<dbReference type="Reactome" id="R-RNO-9013406">
    <property type="pathway name" value="RHOQ GTPase cycle"/>
</dbReference>
<dbReference type="Reactome" id="R-RNO-9013420">
    <property type="pathway name" value="RHOU GTPase cycle"/>
</dbReference>
<dbReference type="Reactome" id="R-RNO-9013424">
    <property type="pathway name" value="RHOV GTPase cycle"/>
</dbReference>
<dbReference type="PRO" id="PR:Q66H91"/>
<dbReference type="Proteomes" id="UP000002494">
    <property type="component" value="Chromosome 12"/>
</dbReference>
<dbReference type="GO" id="GO:0044305">
    <property type="term" value="C:calyx of Held"/>
    <property type="evidence" value="ECO:0000266"/>
    <property type="project" value="RGD"/>
</dbReference>
<dbReference type="GO" id="GO:0005654">
    <property type="term" value="C:nucleoplasm"/>
    <property type="evidence" value="ECO:0000266"/>
    <property type="project" value="RGD"/>
</dbReference>
<dbReference type="GO" id="GO:0098793">
    <property type="term" value="C:presynapse"/>
    <property type="evidence" value="ECO:0000266"/>
    <property type="project" value="RGD"/>
</dbReference>
<dbReference type="GO" id="GO:0045202">
    <property type="term" value="C:synapse"/>
    <property type="evidence" value="ECO:0000318"/>
    <property type="project" value="GO_Central"/>
</dbReference>
<dbReference type="GO" id="GO:0005096">
    <property type="term" value="F:GTPase activator activity"/>
    <property type="evidence" value="ECO:0000318"/>
    <property type="project" value="GO_Central"/>
</dbReference>
<dbReference type="GO" id="GO:0044877">
    <property type="term" value="F:protein-containing complex binding"/>
    <property type="evidence" value="ECO:0000266"/>
    <property type="project" value="RGD"/>
</dbReference>
<dbReference type="GO" id="GO:0031267">
    <property type="term" value="F:small GTPase binding"/>
    <property type="evidence" value="ECO:0000318"/>
    <property type="project" value="GO_Central"/>
</dbReference>
<dbReference type="GO" id="GO:0008270">
    <property type="term" value="F:zinc ion binding"/>
    <property type="evidence" value="ECO:0007669"/>
    <property type="project" value="UniProtKB-KW"/>
</dbReference>
<dbReference type="GO" id="GO:0048266">
    <property type="term" value="P:behavioral response to pain"/>
    <property type="evidence" value="ECO:0000266"/>
    <property type="project" value="RGD"/>
</dbReference>
<dbReference type="GO" id="GO:0007420">
    <property type="term" value="P:brain development"/>
    <property type="evidence" value="ECO:0000318"/>
    <property type="project" value="GO_Central"/>
</dbReference>
<dbReference type="GO" id="GO:0099171">
    <property type="term" value="P:presynaptic modulation of chemical synaptic transmission"/>
    <property type="evidence" value="ECO:0000266"/>
    <property type="project" value="RGD"/>
</dbReference>
<dbReference type="GO" id="GO:0032012">
    <property type="term" value="P:regulation of ARF protein signal transduction"/>
    <property type="evidence" value="ECO:0000318"/>
    <property type="project" value="GO_Central"/>
</dbReference>
<dbReference type="GO" id="GO:0008277">
    <property type="term" value="P:regulation of G protein-coupled receptor signaling pathway"/>
    <property type="evidence" value="ECO:0000318"/>
    <property type="project" value="GO_Central"/>
</dbReference>
<dbReference type="GO" id="GO:2000300">
    <property type="term" value="P:regulation of synaptic vesicle exocytosis"/>
    <property type="evidence" value="ECO:0000266"/>
    <property type="project" value="RGD"/>
</dbReference>
<dbReference type="GO" id="GO:0036465">
    <property type="term" value="P:synaptic vesicle recycling"/>
    <property type="evidence" value="ECO:0000318"/>
    <property type="project" value="GO_Central"/>
</dbReference>
<dbReference type="CDD" id="cd08847">
    <property type="entry name" value="ArfGap_GIT2"/>
    <property type="match status" value="1"/>
</dbReference>
<dbReference type="FunFam" id="1.25.40.20:FF:000013">
    <property type="entry name" value="ARF GTPase-activating protein GIT1 isoform 1"/>
    <property type="match status" value="1"/>
</dbReference>
<dbReference type="FunFam" id="1.10.220.150:FF:000003">
    <property type="entry name" value="ARF GTPase-activating protein GIT2 isoform 1"/>
    <property type="match status" value="1"/>
</dbReference>
<dbReference type="FunFam" id="1.20.120.330:FF:000002">
    <property type="entry name" value="ARF GTPase-activating protein GIT2 isoform 1"/>
    <property type="match status" value="1"/>
</dbReference>
<dbReference type="FunFam" id="1.20.5.170:FF:000015">
    <property type="entry name" value="ARF GTPase-activating protein GIT2 isoform 1"/>
    <property type="match status" value="1"/>
</dbReference>
<dbReference type="Gene3D" id="1.20.5.170">
    <property type="match status" value="1"/>
</dbReference>
<dbReference type="Gene3D" id="1.25.40.20">
    <property type="entry name" value="Ankyrin repeat-containing domain"/>
    <property type="match status" value="1"/>
</dbReference>
<dbReference type="Gene3D" id="1.10.220.150">
    <property type="entry name" value="Arf GTPase activating protein"/>
    <property type="match status" value="1"/>
</dbReference>
<dbReference type="Gene3D" id="1.20.120.330">
    <property type="entry name" value="Nucleotidyltransferases domain 2"/>
    <property type="match status" value="1"/>
</dbReference>
<dbReference type="InterPro" id="IPR002110">
    <property type="entry name" value="Ankyrin_rpt"/>
</dbReference>
<dbReference type="InterPro" id="IPR036770">
    <property type="entry name" value="Ankyrin_rpt-contain_sf"/>
</dbReference>
<dbReference type="InterPro" id="IPR037278">
    <property type="entry name" value="ARFGAP/RecO"/>
</dbReference>
<dbReference type="InterPro" id="IPR001164">
    <property type="entry name" value="ArfGAP_dom"/>
</dbReference>
<dbReference type="InterPro" id="IPR038508">
    <property type="entry name" value="ArfGAP_dom_sf"/>
</dbReference>
<dbReference type="InterPro" id="IPR047161">
    <property type="entry name" value="GIT-like"/>
</dbReference>
<dbReference type="InterPro" id="IPR032352">
    <property type="entry name" value="GIT1/2_CC"/>
</dbReference>
<dbReference type="InterPro" id="IPR022018">
    <property type="entry name" value="GIT1_C"/>
</dbReference>
<dbReference type="InterPro" id="IPR013724">
    <property type="entry name" value="GIT_SHD"/>
</dbReference>
<dbReference type="PANTHER" id="PTHR46097:SF4">
    <property type="entry name" value="ARF GTPASE-ACTIVATING PROTEIN GIT2"/>
    <property type="match status" value="1"/>
</dbReference>
<dbReference type="PANTHER" id="PTHR46097">
    <property type="entry name" value="G PROTEIN-COUPLED RECEPTOR KINASE INTERACTING ARFGAP"/>
    <property type="match status" value="1"/>
</dbReference>
<dbReference type="Pfam" id="PF12796">
    <property type="entry name" value="Ank_2"/>
    <property type="match status" value="1"/>
</dbReference>
<dbReference type="Pfam" id="PF01412">
    <property type="entry name" value="ArfGap"/>
    <property type="match status" value="1"/>
</dbReference>
<dbReference type="Pfam" id="PF12205">
    <property type="entry name" value="GIT1_C"/>
    <property type="match status" value="1"/>
</dbReference>
<dbReference type="Pfam" id="PF16559">
    <property type="entry name" value="GIT_CC"/>
    <property type="match status" value="1"/>
</dbReference>
<dbReference type="Pfam" id="PF08518">
    <property type="entry name" value="GIT_SHD"/>
    <property type="match status" value="2"/>
</dbReference>
<dbReference type="PRINTS" id="PR00405">
    <property type="entry name" value="REVINTRACTNG"/>
</dbReference>
<dbReference type="SMART" id="SM00248">
    <property type="entry name" value="ANK"/>
    <property type="match status" value="3"/>
</dbReference>
<dbReference type="SMART" id="SM00105">
    <property type="entry name" value="ArfGap"/>
    <property type="match status" value="1"/>
</dbReference>
<dbReference type="SMART" id="SM00555">
    <property type="entry name" value="GIT"/>
    <property type="match status" value="2"/>
</dbReference>
<dbReference type="SUPFAM" id="SSF48403">
    <property type="entry name" value="Ankyrin repeat"/>
    <property type="match status" value="1"/>
</dbReference>
<dbReference type="SUPFAM" id="SSF57863">
    <property type="entry name" value="ArfGap/RecO-like zinc finger"/>
    <property type="match status" value="1"/>
</dbReference>
<dbReference type="PROSITE" id="PS50297">
    <property type="entry name" value="ANK_REP_REGION"/>
    <property type="match status" value="1"/>
</dbReference>
<dbReference type="PROSITE" id="PS50088">
    <property type="entry name" value="ANK_REPEAT"/>
    <property type="match status" value="1"/>
</dbReference>
<dbReference type="PROSITE" id="PS50115">
    <property type="entry name" value="ARFGAP"/>
    <property type="match status" value="1"/>
</dbReference>
<keyword id="KW-0040">ANK repeat</keyword>
<keyword id="KW-0175">Coiled coil</keyword>
<keyword id="KW-0343">GTPase activation</keyword>
<keyword id="KW-0479">Metal-binding</keyword>
<keyword id="KW-1185">Reference proteome</keyword>
<keyword id="KW-0677">Repeat</keyword>
<keyword id="KW-0862">Zinc</keyword>
<keyword id="KW-0863">Zinc-finger</keyword>
<protein>
    <recommendedName>
        <fullName>ARF GTPase-activating protein GIT2</fullName>
        <shortName>ARF GAP GIT2</shortName>
    </recommendedName>
    <alternativeName>
        <fullName>Cool-interacting tyrosine-phosphorylated protein 2</fullName>
        <shortName>CAT-2</shortName>
        <shortName>CAT2</shortName>
    </alternativeName>
    <alternativeName>
        <fullName>G protein-coupled receptor kinase-interactor 2</fullName>
    </alternativeName>
    <alternativeName>
        <fullName>GRK-interacting protein 2</fullName>
    </alternativeName>
</protein>
<sequence>MSKRLRSNDVCADCSGPDPSWASVNRGTLICDECCSVHRSLGRHISQVRHLKHTPWPPTLLQMVETLYSNGANSIWEHSLLDPASVMSGRRKANPQDKVHPNKAEFIRAKYQMLAFVHRLPCRDDDSVTAKDLSKQLHSSVRTGNLETCLRLLSLGAQANFFHPEKGSTPLHVASKAGQILQAELLAVYGADPGTHDSSGKTPVDYARQGGHRELAERLVEIQYELTDRLAFYLCGRKPDHKNGQHFIIPQMADSSLDLSELAKAAKKKLQSLSNHLFEELAMDVYDEVDRRETDAVWLATQNHSTLVTETTVVPFLPVNPEYSSTRNQGRQKLARFNAHEFATLVIDILSDAKRRQQGSPLSRSKDNVELILRTVSNQHSTESQDNDQPDYDSVASDEDTDVETRASRTNRQKSLDSDLSDGPVTVQEFMEVKHALVASEAKRQQLMKVNNNLSGELRIMQKKLQTLQSENSSLRRQATASACQVQTASDHKDTVSHSSLKRRPSARGSRPMSMYETGSGQKPYLPMGEANHPEESRTRLQPFPTHIGRSALVTSSSSLPSFPSTLSWSRDESTRRASRLEKQNSTPESDYDNTAYDPEPDDTVSGRKGRQRSMLWQGDGPLPDTAEPHAVPSPALPSTEDVIRKTEQITKNIQELLRAAQENKHDSYIPCSERIHAAVTEMAALFPKKPKSDTVRTSLRLLTASAYRLQSECRKALPGDSSLPTDVQLVTQQVIQCAYDIAKAAKQLVTITTKENSS</sequence>
<name>GIT2_RAT</name>
<proteinExistence type="evidence at protein level"/>
<reference key="1">
    <citation type="journal article" date="2004" name="Genome Res.">
        <title>The status, quality, and expansion of the NIH full-length cDNA project: the Mammalian Gene Collection (MGC).</title>
        <authorList>
            <consortium name="The MGC Project Team"/>
        </authorList>
    </citation>
    <scope>NUCLEOTIDE SEQUENCE [LARGE SCALE MRNA]</scope>
    <source>
        <tissue>Lung</tissue>
    </source>
</reference>
<reference key="2">
    <citation type="journal article" date="2004" name="Nature">
        <title>Genome sequence of the Brown Norway rat yields insights into mammalian evolution.</title>
        <authorList>
            <person name="Gibbs R.A."/>
            <person name="Weinstock G.M."/>
            <person name="Metzker M.L."/>
            <person name="Muzny D.M."/>
            <person name="Sodergren E.J."/>
            <person name="Scherer S."/>
            <person name="Scott G."/>
            <person name="Steffen D."/>
            <person name="Worley K.C."/>
            <person name="Burch P.E."/>
            <person name="Okwuonu G."/>
            <person name="Hines S."/>
            <person name="Lewis L."/>
            <person name="Deramo C."/>
            <person name="Delgado O."/>
            <person name="Dugan-Rocha S."/>
            <person name="Miner G."/>
            <person name="Morgan M."/>
            <person name="Hawes A."/>
            <person name="Gill R."/>
            <person name="Holt R.A."/>
            <person name="Adams M.D."/>
            <person name="Amanatides P.G."/>
            <person name="Baden-Tillson H."/>
            <person name="Barnstead M."/>
            <person name="Chin S."/>
            <person name="Evans C.A."/>
            <person name="Ferriera S."/>
            <person name="Fosler C."/>
            <person name="Glodek A."/>
            <person name="Gu Z."/>
            <person name="Jennings D."/>
            <person name="Kraft C.L."/>
            <person name="Nguyen T."/>
            <person name="Pfannkoch C.M."/>
            <person name="Sitter C."/>
            <person name="Sutton G.G."/>
            <person name="Venter J.C."/>
            <person name="Woodage T."/>
            <person name="Smith D."/>
            <person name="Lee H.-M."/>
            <person name="Gustafson E."/>
            <person name="Cahill P."/>
            <person name="Kana A."/>
            <person name="Doucette-Stamm L."/>
            <person name="Weinstock K."/>
            <person name="Fechtel K."/>
            <person name="Weiss R.B."/>
            <person name="Dunn D.M."/>
            <person name="Green E.D."/>
            <person name="Blakesley R.W."/>
            <person name="Bouffard G.G."/>
            <person name="De Jong P.J."/>
            <person name="Osoegawa K."/>
            <person name="Zhu B."/>
            <person name="Marra M."/>
            <person name="Schein J."/>
            <person name="Bosdet I."/>
            <person name="Fjell C."/>
            <person name="Jones S."/>
            <person name="Krzywinski M."/>
            <person name="Mathewson C."/>
            <person name="Siddiqui A."/>
            <person name="Wye N."/>
            <person name="McPherson J."/>
            <person name="Zhao S."/>
            <person name="Fraser C.M."/>
            <person name="Shetty J."/>
            <person name="Shatsman S."/>
            <person name="Geer K."/>
            <person name="Chen Y."/>
            <person name="Abramzon S."/>
            <person name="Nierman W.C."/>
            <person name="Havlak P.H."/>
            <person name="Chen R."/>
            <person name="Durbin K.J."/>
            <person name="Egan A."/>
            <person name="Ren Y."/>
            <person name="Song X.-Z."/>
            <person name="Li B."/>
            <person name="Liu Y."/>
            <person name="Qin X."/>
            <person name="Cawley S."/>
            <person name="Cooney A.J."/>
            <person name="D'Souza L.M."/>
            <person name="Martin K."/>
            <person name="Wu J.Q."/>
            <person name="Gonzalez-Garay M.L."/>
            <person name="Jackson A.R."/>
            <person name="Kalafus K.J."/>
            <person name="McLeod M.P."/>
            <person name="Milosavljevic A."/>
            <person name="Virk D."/>
            <person name="Volkov A."/>
            <person name="Wheeler D.A."/>
            <person name="Zhang Z."/>
            <person name="Bailey J.A."/>
            <person name="Eichler E.E."/>
            <person name="Tuzun E."/>
            <person name="Birney E."/>
            <person name="Mongin E."/>
            <person name="Ureta-Vidal A."/>
            <person name="Woodwark C."/>
            <person name="Zdobnov E."/>
            <person name="Bork P."/>
            <person name="Suyama M."/>
            <person name="Torrents D."/>
            <person name="Alexandersson M."/>
            <person name="Trask B.J."/>
            <person name="Young J.M."/>
            <person name="Huang H."/>
            <person name="Wang H."/>
            <person name="Xing H."/>
            <person name="Daniels S."/>
            <person name="Gietzen D."/>
            <person name="Schmidt J."/>
            <person name="Stevens K."/>
            <person name="Vitt U."/>
            <person name="Wingrove J."/>
            <person name="Camara F."/>
            <person name="Mar Alba M."/>
            <person name="Abril J.F."/>
            <person name="Guigo R."/>
            <person name="Smit A."/>
            <person name="Dubchak I."/>
            <person name="Rubin E.M."/>
            <person name="Couronne O."/>
            <person name="Poliakov A."/>
            <person name="Huebner N."/>
            <person name="Ganten D."/>
            <person name="Goesele C."/>
            <person name="Hummel O."/>
            <person name="Kreitler T."/>
            <person name="Lee Y.-A."/>
            <person name="Monti J."/>
            <person name="Schulz H."/>
            <person name="Zimdahl H."/>
            <person name="Himmelbauer H."/>
            <person name="Lehrach H."/>
            <person name="Jacob H.J."/>
            <person name="Bromberg S."/>
            <person name="Gullings-Handley J."/>
            <person name="Jensen-Seaman M.I."/>
            <person name="Kwitek A.E."/>
            <person name="Lazar J."/>
            <person name="Pasko D."/>
            <person name="Tonellato P.J."/>
            <person name="Twigger S."/>
            <person name="Ponting C.P."/>
            <person name="Duarte J.M."/>
            <person name="Rice S."/>
            <person name="Goodstadt L."/>
            <person name="Beatson S.A."/>
            <person name="Emes R.D."/>
            <person name="Winter E.E."/>
            <person name="Webber C."/>
            <person name="Brandt P."/>
            <person name="Nyakatura G."/>
            <person name="Adetobi M."/>
            <person name="Chiaromonte F."/>
            <person name="Elnitski L."/>
            <person name="Eswara P."/>
            <person name="Hardison R.C."/>
            <person name="Hou M."/>
            <person name="Kolbe D."/>
            <person name="Makova K."/>
            <person name="Miller W."/>
            <person name="Nekrutenko A."/>
            <person name="Riemer C."/>
            <person name="Schwartz S."/>
            <person name="Taylor J."/>
            <person name="Yang S."/>
            <person name="Zhang Y."/>
            <person name="Lindpaintner K."/>
            <person name="Andrews T.D."/>
            <person name="Caccamo M."/>
            <person name="Clamp M."/>
            <person name="Clarke L."/>
            <person name="Curwen V."/>
            <person name="Durbin R.M."/>
            <person name="Eyras E."/>
            <person name="Searle S.M."/>
            <person name="Cooper G.M."/>
            <person name="Batzoglou S."/>
            <person name="Brudno M."/>
            <person name="Sidow A."/>
            <person name="Stone E.A."/>
            <person name="Payseur B.A."/>
            <person name="Bourque G."/>
            <person name="Lopez-Otin C."/>
            <person name="Puente X.S."/>
            <person name="Chakrabarti K."/>
            <person name="Chatterji S."/>
            <person name="Dewey C."/>
            <person name="Pachter L."/>
            <person name="Bray N."/>
            <person name="Yap V.B."/>
            <person name="Caspi A."/>
            <person name="Tesler G."/>
            <person name="Pevzner P.A."/>
            <person name="Haussler D."/>
            <person name="Roskin K.M."/>
            <person name="Baertsch R."/>
            <person name="Clawson H."/>
            <person name="Furey T.S."/>
            <person name="Hinrichs A.S."/>
            <person name="Karolchik D."/>
            <person name="Kent W.J."/>
            <person name="Rosenbloom K.R."/>
            <person name="Trumbower H."/>
            <person name="Weirauch M."/>
            <person name="Cooper D.N."/>
            <person name="Stenson P.D."/>
            <person name="Ma B."/>
            <person name="Brent M."/>
            <person name="Arumugam M."/>
            <person name="Shteynberg D."/>
            <person name="Copley R.R."/>
            <person name="Taylor M.S."/>
            <person name="Riethman H."/>
            <person name="Mudunuri U."/>
            <person name="Peterson J."/>
            <person name="Guyer M."/>
            <person name="Felsenfeld A."/>
            <person name="Old S."/>
            <person name="Mockrin S."/>
            <person name="Collins F.S."/>
        </authorList>
    </citation>
    <scope>NUCLEOTIDE SEQUENCE [LARGE SCALE GENOMIC DNA]</scope>
    <source>
        <strain>Brown Norway</strain>
    </source>
</reference>
<reference key="3">
    <citation type="journal article" date="2003" name="J. Biol. Chem.">
        <title>The GIT family of proteins forms multimers and associates with the presynaptic cytomatrix protein Piccolo.</title>
        <authorList>
            <person name="Kim S."/>
            <person name="Ko J."/>
            <person name="Shin H."/>
            <person name="Lee J.R."/>
            <person name="Lim C."/>
            <person name="Han J.H."/>
            <person name="Altrock W.D."/>
            <person name="Garner C.C."/>
            <person name="Gundelfinger E.D."/>
            <person name="Premont R.T."/>
            <person name="Kaang B.K."/>
            <person name="Kim E."/>
        </authorList>
    </citation>
    <scope>INTERACTION WITH GIT1 AND PCLO</scope>
</reference>
<reference key="4">
    <citation type="journal article" date="2003" name="J. Neurosci.">
        <title>Interaction between liprin-alpha and GIT1 is required for AMPA receptor targeting.</title>
        <authorList>
            <person name="Ko J."/>
            <person name="Kim S."/>
            <person name="Valtschanoff J.G."/>
            <person name="Shin H."/>
            <person name="Lee J.R."/>
            <person name="Sheng M."/>
            <person name="Premont R.T."/>
            <person name="Weinberg R.J."/>
            <person name="Kim E."/>
        </authorList>
    </citation>
    <scope>INTERACTION WITH PPFIA1 AND PPFIA2</scope>
</reference>
<reference key="5">
    <citation type="journal article" date="2012" name="Nat. Commun.">
        <title>Quantitative maps of protein phosphorylation sites across 14 different rat organs and tissues.</title>
        <authorList>
            <person name="Lundby A."/>
            <person name="Secher A."/>
            <person name="Lage K."/>
            <person name="Nordsborg N.B."/>
            <person name="Dmytriyev A."/>
            <person name="Lundby C."/>
            <person name="Olsen J.V."/>
        </authorList>
    </citation>
    <scope>IDENTIFICATION BY MASS SPECTROMETRY [LARGE SCALE ANALYSIS]</scope>
</reference>
<comment type="function">
    <text evidence="1">GTPase-activating protein for ADP ribosylation factor family members, including ARF1.</text>
</comment>
<comment type="subunit">
    <text evidence="1 2 7 8 9">May form heterooligomers with GIT1 (Probable). Directly interacts with protein Piccolo/PCLO (PubMed:12473661). Interacts with PPFIA1 and PPFIA2 (PubMed:12629171). Interacts with ARHGEF7 (By similarity). Identified in a complex with ARHGEF6 and BIN2 (By similarity). Interacts with PAK3 (By similarity). Interacts with PXN/paxillin (By similarity). Interacts with TGFB1I1 (By similarity). Forms a complex with EFNB1 and GRB4/NCK2 (By similarity).</text>
</comment>